<feature type="chain" id="PRO_0000245683" description="NAD(P)H-quinone oxidoreductase subunit I">
    <location>
        <begin position="1"/>
        <end position="219"/>
    </location>
</feature>
<feature type="domain" description="4Fe-4S ferredoxin-type 1" evidence="1">
    <location>
        <begin position="55"/>
        <end position="84"/>
    </location>
</feature>
<feature type="domain" description="4Fe-4S ferredoxin-type 2" evidence="1">
    <location>
        <begin position="95"/>
        <end position="124"/>
    </location>
</feature>
<feature type="binding site" evidence="1">
    <location>
        <position position="64"/>
    </location>
    <ligand>
        <name>[4Fe-4S] cluster</name>
        <dbReference type="ChEBI" id="CHEBI:49883"/>
        <label>1</label>
    </ligand>
</feature>
<feature type="binding site" evidence="1">
    <location>
        <position position="67"/>
    </location>
    <ligand>
        <name>[4Fe-4S] cluster</name>
        <dbReference type="ChEBI" id="CHEBI:49883"/>
        <label>1</label>
    </ligand>
</feature>
<feature type="binding site" evidence="1">
    <location>
        <position position="70"/>
    </location>
    <ligand>
        <name>[4Fe-4S] cluster</name>
        <dbReference type="ChEBI" id="CHEBI:49883"/>
        <label>1</label>
    </ligand>
</feature>
<feature type="binding site" evidence="1">
    <location>
        <position position="74"/>
    </location>
    <ligand>
        <name>[4Fe-4S] cluster</name>
        <dbReference type="ChEBI" id="CHEBI:49883"/>
        <label>2</label>
    </ligand>
</feature>
<feature type="binding site" evidence="1">
    <location>
        <position position="104"/>
    </location>
    <ligand>
        <name>[4Fe-4S] cluster</name>
        <dbReference type="ChEBI" id="CHEBI:49883"/>
        <label>2</label>
    </ligand>
</feature>
<feature type="binding site" evidence="1">
    <location>
        <position position="107"/>
    </location>
    <ligand>
        <name>[4Fe-4S] cluster</name>
        <dbReference type="ChEBI" id="CHEBI:49883"/>
        <label>2</label>
    </ligand>
</feature>
<feature type="binding site" evidence="1">
    <location>
        <position position="110"/>
    </location>
    <ligand>
        <name>[4Fe-4S] cluster</name>
        <dbReference type="ChEBI" id="CHEBI:49883"/>
        <label>2</label>
    </ligand>
</feature>
<feature type="binding site" evidence="1">
    <location>
        <position position="114"/>
    </location>
    <ligand>
        <name>[4Fe-4S] cluster</name>
        <dbReference type="ChEBI" id="CHEBI:49883"/>
        <label>1</label>
    </ligand>
</feature>
<organism>
    <name type="scientific">Prochlorococcus marinus (strain SARG / CCMP1375 / SS120)</name>
    <dbReference type="NCBI Taxonomy" id="167539"/>
    <lineage>
        <taxon>Bacteria</taxon>
        <taxon>Bacillati</taxon>
        <taxon>Cyanobacteriota</taxon>
        <taxon>Cyanophyceae</taxon>
        <taxon>Synechococcales</taxon>
        <taxon>Prochlorococcaceae</taxon>
        <taxon>Prochlorococcus</taxon>
    </lineage>
</organism>
<evidence type="ECO:0000255" key="1">
    <source>
        <dbReference type="HAMAP-Rule" id="MF_01351"/>
    </source>
</evidence>
<accession>Q7VE31</accession>
<dbReference type="EC" id="7.1.1.-" evidence="1"/>
<dbReference type="EMBL" id="AE017126">
    <property type="protein sequence ID" value="AAP99229.1"/>
    <property type="molecule type" value="Genomic_DNA"/>
</dbReference>
<dbReference type="RefSeq" id="NP_874577.1">
    <property type="nucleotide sequence ID" value="NC_005042.1"/>
</dbReference>
<dbReference type="RefSeq" id="WP_011124338.1">
    <property type="nucleotide sequence ID" value="NC_005042.1"/>
</dbReference>
<dbReference type="SMR" id="Q7VE31"/>
<dbReference type="STRING" id="167539.Pro_0183"/>
<dbReference type="EnsemblBacteria" id="AAP99229">
    <property type="protein sequence ID" value="AAP99229"/>
    <property type="gene ID" value="Pro_0183"/>
</dbReference>
<dbReference type="KEGG" id="pma:Pro_0183"/>
<dbReference type="PATRIC" id="fig|167539.5.peg.190"/>
<dbReference type="eggNOG" id="COG1143">
    <property type="taxonomic scope" value="Bacteria"/>
</dbReference>
<dbReference type="HOGENOM" id="CLU_122804_0_0_3"/>
<dbReference type="OrthoDB" id="9798098at2"/>
<dbReference type="Proteomes" id="UP000001420">
    <property type="component" value="Chromosome"/>
</dbReference>
<dbReference type="GO" id="GO:0031676">
    <property type="term" value="C:plasma membrane-derived thylakoid membrane"/>
    <property type="evidence" value="ECO:0007669"/>
    <property type="project" value="UniProtKB-SubCell"/>
</dbReference>
<dbReference type="GO" id="GO:0051539">
    <property type="term" value="F:4 iron, 4 sulfur cluster binding"/>
    <property type="evidence" value="ECO:0007669"/>
    <property type="project" value="UniProtKB-KW"/>
</dbReference>
<dbReference type="GO" id="GO:0005506">
    <property type="term" value="F:iron ion binding"/>
    <property type="evidence" value="ECO:0007669"/>
    <property type="project" value="UniProtKB-UniRule"/>
</dbReference>
<dbReference type="GO" id="GO:0008137">
    <property type="term" value="F:NADH dehydrogenase (ubiquinone) activity"/>
    <property type="evidence" value="ECO:0007669"/>
    <property type="project" value="InterPro"/>
</dbReference>
<dbReference type="GO" id="GO:0048038">
    <property type="term" value="F:quinone binding"/>
    <property type="evidence" value="ECO:0007669"/>
    <property type="project" value="UniProtKB-KW"/>
</dbReference>
<dbReference type="GO" id="GO:0019684">
    <property type="term" value="P:photosynthesis, light reaction"/>
    <property type="evidence" value="ECO:0007669"/>
    <property type="project" value="UniProtKB-UniRule"/>
</dbReference>
<dbReference type="Gene3D" id="3.30.70.3270">
    <property type="match status" value="1"/>
</dbReference>
<dbReference type="HAMAP" id="MF_01351">
    <property type="entry name" value="NDH1_NuoI"/>
    <property type="match status" value="1"/>
</dbReference>
<dbReference type="InterPro" id="IPR017896">
    <property type="entry name" value="4Fe4S_Fe-S-bd"/>
</dbReference>
<dbReference type="InterPro" id="IPR017900">
    <property type="entry name" value="4Fe4S_Fe_S_CS"/>
</dbReference>
<dbReference type="InterPro" id="IPR010226">
    <property type="entry name" value="NADH_quinone_OxRdtase_chainI"/>
</dbReference>
<dbReference type="InterPro" id="IPR004497">
    <property type="entry name" value="NDHI"/>
</dbReference>
<dbReference type="NCBIfam" id="TIGR00403">
    <property type="entry name" value="ndhI"/>
    <property type="match status" value="1"/>
</dbReference>
<dbReference type="NCBIfam" id="TIGR01971">
    <property type="entry name" value="NuoI"/>
    <property type="match status" value="1"/>
</dbReference>
<dbReference type="NCBIfam" id="NF004537">
    <property type="entry name" value="PRK05888.1-3"/>
    <property type="match status" value="1"/>
</dbReference>
<dbReference type="PANTHER" id="PTHR47275">
    <property type="entry name" value="NAD(P)H-QUINONE OXIDOREDUCTASE SUBUNIT I, CHLOROPLASTIC"/>
    <property type="match status" value="1"/>
</dbReference>
<dbReference type="PANTHER" id="PTHR47275:SF1">
    <property type="entry name" value="NAD(P)H-QUINONE OXIDOREDUCTASE SUBUNIT I, CHLOROPLASTIC"/>
    <property type="match status" value="1"/>
</dbReference>
<dbReference type="Pfam" id="PF12838">
    <property type="entry name" value="Fer4_7"/>
    <property type="match status" value="1"/>
</dbReference>
<dbReference type="SUPFAM" id="SSF54862">
    <property type="entry name" value="4Fe-4S ferredoxins"/>
    <property type="match status" value="1"/>
</dbReference>
<dbReference type="PROSITE" id="PS00198">
    <property type="entry name" value="4FE4S_FER_1"/>
    <property type="match status" value="2"/>
</dbReference>
<dbReference type="PROSITE" id="PS51379">
    <property type="entry name" value="4FE4S_FER_2"/>
    <property type="match status" value="2"/>
</dbReference>
<sequence>MGTFFQKIADYSKDAVSAGKYLLQGLAVTFDHMRRRPITVQYPYEKLIPSERYRGRIHYEFDKCIACEVCVRVCPINLPVVDWVMNKETKKKELRNYSIDFGVCIFCGNCVEYCPTNCLSMTEEYELAAFDRHSLNFDNVALGRLPTSVTSDPSVMPLRELGYLPEGVMDPHELPKDSSRAGKLPIEIMDWMKNKESNKSEDNNLDININSLKVEKDSK</sequence>
<keyword id="KW-0004">4Fe-4S</keyword>
<keyword id="KW-0408">Iron</keyword>
<keyword id="KW-0411">Iron-sulfur</keyword>
<keyword id="KW-0472">Membrane</keyword>
<keyword id="KW-0479">Metal-binding</keyword>
<keyword id="KW-0520">NAD</keyword>
<keyword id="KW-0521">NADP</keyword>
<keyword id="KW-0618">Plastoquinone</keyword>
<keyword id="KW-0874">Quinone</keyword>
<keyword id="KW-1185">Reference proteome</keyword>
<keyword id="KW-0677">Repeat</keyword>
<keyword id="KW-0793">Thylakoid</keyword>
<keyword id="KW-1278">Translocase</keyword>
<gene>
    <name evidence="1" type="primary">ndhI</name>
    <name type="ordered locus">Pro_0183</name>
</gene>
<name>NDHI_PROMA</name>
<comment type="function">
    <text evidence="1">NDH-1 shuttles electrons from an unknown electron donor, via FMN and iron-sulfur (Fe-S) centers, to quinones in the respiratory and/or the photosynthetic chain. The immediate electron acceptor for the enzyme in this species is believed to be plastoquinone. Couples the redox reaction to proton translocation, and thus conserves the redox energy in a proton gradient.</text>
</comment>
<comment type="catalytic activity">
    <reaction evidence="1">
        <text>a plastoquinone + NADH + (n+1) H(+)(in) = a plastoquinol + NAD(+) + n H(+)(out)</text>
        <dbReference type="Rhea" id="RHEA:42608"/>
        <dbReference type="Rhea" id="RHEA-COMP:9561"/>
        <dbReference type="Rhea" id="RHEA-COMP:9562"/>
        <dbReference type="ChEBI" id="CHEBI:15378"/>
        <dbReference type="ChEBI" id="CHEBI:17757"/>
        <dbReference type="ChEBI" id="CHEBI:57540"/>
        <dbReference type="ChEBI" id="CHEBI:57945"/>
        <dbReference type="ChEBI" id="CHEBI:62192"/>
    </reaction>
</comment>
<comment type="catalytic activity">
    <reaction evidence="1">
        <text>a plastoquinone + NADPH + (n+1) H(+)(in) = a plastoquinol + NADP(+) + n H(+)(out)</text>
        <dbReference type="Rhea" id="RHEA:42612"/>
        <dbReference type="Rhea" id="RHEA-COMP:9561"/>
        <dbReference type="Rhea" id="RHEA-COMP:9562"/>
        <dbReference type="ChEBI" id="CHEBI:15378"/>
        <dbReference type="ChEBI" id="CHEBI:17757"/>
        <dbReference type="ChEBI" id="CHEBI:57783"/>
        <dbReference type="ChEBI" id="CHEBI:58349"/>
        <dbReference type="ChEBI" id="CHEBI:62192"/>
    </reaction>
</comment>
<comment type="cofactor">
    <cofactor evidence="1">
        <name>[4Fe-4S] cluster</name>
        <dbReference type="ChEBI" id="CHEBI:49883"/>
    </cofactor>
    <text evidence="1">Binds 2 [4Fe-4S] clusters per subunit.</text>
</comment>
<comment type="subunit">
    <text evidence="1">NDH-1 is composed of at least 11 different subunits.</text>
</comment>
<comment type="subcellular location">
    <subcellularLocation>
        <location evidence="1">Cellular thylakoid membrane</location>
        <topology evidence="1">Peripheral membrane protein</topology>
    </subcellularLocation>
</comment>
<comment type="similarity">
    <text evidence="1">Belongs to the complex I 23 kDa subunit family.</text>
</comment>
<protein>
    <recommendedName>
        <fullName evidence="1">NAD(P)H-quinone oxidoreductase subunit I</fullName>
        <ecNumber evidence="1">7.1.1.-</ecNumber>
    </recommendedName>
    <alternativeName>
        <fullName evidence="1">NAD(P)H dehydrogenase I subunit I</fullName>
    </alternativeName>
    <alternativeName>
        <fullName evidence="1">NDH-1 subunit I</fullName>
        <shortName evidence="1">NDH-I</shortName>
    </alternativeName>
</protein>
<proteinExistence type="inferred from homology"/>
<reference key="1">
    <citation type="journal article" date="2003" name="Proc. Natl. Acad. Sci. U.S.A.">
        <title>Genome sequence of the cyanobacterium Prochlorococcus marinus SS120, a nearly minimal oxyphototrophic genome.</title>
        <authorList>
            <person name="Dufresne A."/>
            <person name="Salanoubat M."/>
            <person name="Partensky F."/>
            <person name="Artiguenave F."/>
            <person name="Axmann I.M."/>
            <person name="Barbe V."/>
            <person name="Duprat S."/>
            <person name="Galperin M.Y."/>
            <person name="Koonin E.V."/>
            <person name="Le Gall F."/>
            <person name="Makarova K.S."/>
            <person name="Ostrowski M."/>
            <person name="Oztas S."/>
            <person name="Robert C."/>
            <person name="Rogozin I.B."/>
            <person name="Scanlan D.J."/>
            <person name="Tandeau de Marsac N."/>
            <person name="Weissenbach J."/>
            <person name="Wincker P."/>
            <person name="Wolf Y.I."/>
            <person name="Hess W.R."/>
        </authorList>
    </citation>
    <scope>NUCLEOTIDE SEQUENCE [LARGE SCALE GENOMIC DNA]</scope>
    <source>
        <strain>SARG / CCMP1375 / SS120</strain>
    </source>
</reference>